<dbReference type="EC" id="2.3.1.-"/>
<dbReference type="EMBL" id="AF527790">
    <property type="protein sequence ID" value="AAP46695.1"/>
    <property type="molecule type" value="Genomic_DNA"/>
</dbReference>
<dbReference type="SMR" id="P59788"/>
<dbReference type="eggNOG" id="ENOG502Z8PP">
    <property type="taxonomic scope" value="Bacteria"/>
</dbReference>
<dbReference type="UniPathway" id="UPA00286"/>
<dbReference type="GO" id="GO:0042597">
    <property type="term" value="C:periplasmic space"/>
    <property type="evidence" value="ECO:0007669"/>
    <property type="project" value="UniProtKB-SubCell"/>
</dbReference>
<dbReference type="GO" id="GO:0016746">
    <property type="term" value="F:acyltransferase activity"/>
    <property type="evidence" value="ECO:0007669"/>
    <property type="project" value="UniProtKB-KW"/>
</dbReference>
<dbReference type="GO" id="GO:0042121">
    <property type="term" value="P:alginic acid biosynthetic process"/>
    <property type="evidence" value="ECO:0007669"/>
    <property type="project" value="UniProtKB-UniPathway"/>
</dbReference>
<dbReference type="CDD" id="cd14487">
    <property type="entry name" value="AlgX_C"/>
    <property type="match status" value="1"/>
</dbReference>
<dbReference type="CDD" id="cd14441">
    <property type="entry name" value="AlgX_N"/>
    <property type="match status" value="1"/>
</dbReference>
<dbReference type="Gene3D" id="2.60.120.1380">
    <property type="entry name" value="C-terminal carbohydrate-binding module"/>
    <property type="match status" value="1"/>
</dbReference>
<dbReference type="InterPro" id="IPR031811">
    <property type="entry name" value="ALGX/ALGJ_SGNH-like"/>
</dbReference>
<dbReference type="InterPro" id="IPR031798">
    <property type="entry name" value="AlgX_C"/>
</dbReference>
<dbReference type="InterPro" id="IPR038639">
    <property type="entry name" value="AlgX_C_sf"/>
</dbReference>
<dbReference type="InterPro" id="IPR034655">
    <property type="entry name" value="AlgX_N"/>
</dbReference>
<dbReference type="Pfam" id="PF16822">
    <property type="entry name" value="ALGX"/>
    <property type="match status" value="1"/>
</dbReference>
<dbReference type="Pfam" id="PF16824">
    <property type="entry name" value="CBM_26"/>
    <property type="match status" value="1"/>
</dbReference>
<name>ALGX_PSEFL</name>
<proteinExistence type="inferred from homology"/>
<comment type="function">
    <text evidence="1">Plays two roles in the biosynthesis of the exopolysaccharide alginate: protects alginate from degradation as the polymer traverses the periplasm, and also plays a role in its O-acetylation. Probably has acetyltransferase activity in vivo (By similarity).</text>
</comment>
<comment type="pathway">
    <text>Glycan biosynthesis; alginate biosynthesis.</text>
</comment>
<comment type="subunit">
    <text evidence="1">Monomer.</text>
</comment>
<comment type="subcellular location">
    <subcellularLocation>
        <location evidence="1">Periplasm</location>
    </subcellularLocation>
</comment>
<comment type="domain">
    <text evidence="1">Consists of two domains, with an N-terminal domain with structural homology to members of the SGNH (GDSL) hydrolase superfamily and a C-terminal carbohydrate-binding module (CBM) that may bind alginate.</text>
</comment>
<comment type="similarity">
    <text evidence="3">Belongs to the AlgX family.</text>
</comment>
<keyword id="KW-0012">Acyltransferase</keyword>
<keyword id="KW-0016">Alginate biosynthesis</keyword>
<keyword id="KW-1015">Disulfide bond</keyword>
<keyword id="KW-0574">Periplasm</keyword>
<keyword id="KW-0732">Signal</keyword>
<keyword id="KW-0808">Transferase</keyword>
<reference key="1">
    <citation type="journal article" date="2003" name="J. Bacteriol.">
        <title>The Pseudomonas fluorescens AlgG protein, but not its mannuronan C-5-epimerase activity, is needed for alginate polymer formation.</title>
        <authorList>
            <person name="Gimmestad M."/>
            <person name="Sletta H."/>
            <person name="Ertesvaag H."/>
            <person name="Bakkevig K."/>
            <person name="Jain S."/>
            <person name="Suh S.-J."/>
            <person name="Skjaak-Braek G."/>
            <person name="Ellingsen T.E."/>
            <person name="Ohman D.E."/>
            <person name="Valla S."/>
        </authorList>
    </citation>
    <scope>NUCLEOTIDE SEQUENCE [GENOMIC DNA]</scope>
    <source>
        <strain>ATCC 17397 / DSM 50091 / CIP 73.25 / NCIMB 10525 / 12</strain>
    </source>
</reference>
<protein>
    <recommendedName>
        <fullName>Alginate biosynthesis protein AlgX</fullName>
    </recommendedName>
    <alternativeName>
        <fullName>Probable alginate O-acetyltransferase AlgX</fullName>
        <ecNumber>2.3.1.-</ecNumber>
    </alternativeName>
</protein>
<sequence>MTLMHPHMIKLLSLSGLTLGLLAASQGVRADEIKAPTFTAEPCCSLCPAAHDAKNYTTRYQQNFTTLVQAQGDWLFRTQEDLRTEFDTTPSGYKRMQQLHDAFKAKGVELVVVYQPTRGLVNRNKLNPEEKAKFDFDKALGNYKTMLGRFAKMGYVVPDLSPLTNEQLPDELPAHDFYFRGDQHWTPYGAQRTAKIVAAKVKQMPEYAEIPKREFETKRSGRMGKTGTLHNMAGQLCGTSYAIQYMDQFTTEPKGEAGDGDLFSDSGNPQITLVGTSHSGKNYNFAGFLEEEIGADILNVAFPGGGLEGSMIQYLGSDEFQKSPPKILIWEFSPLYRLDQETIYRQMMALLDNGCEGKTAQMSASTTLKPGKNELLVNSSNKDLRNANHQVDIRFADPSVKTLQATLWYMNGRHEDIKIEKPETSDTDGRFAFELRTDEDWASQNLLAVEVQGPEAGAAAQKVEAKICTRNVFPAGGQQTAAAGQ</sequence>
<organism>
    <name type="scientific">Pseudomonas fluorescens</name>
    <dbReference type="NCBI Taxonomy" id="294"/>
    <lineage>
        <taxon>Bacteria</taxon>
        <taxon>Pseudomonadati</taxon>
        <taxon>Pseudomonadota</taxon>
        <taxon>Gammaproteobacteria</taxon>
        <taxon>Pseudomonadales</taxon>
        <taxon>Pseudomonadaceae</taxon>
        <taxon>Pseudomonas</taxon>
    </lineage>
</organism>
<accession>P59788</accession>
<evidence type="ECO:0000250" key="1"/>
<evidence type="ECO:0000255" key="2"/>
<evidence type="ECO:0000305" key="3"/>
<gene>
    <name type="primary">algX</name>
</gene>
<feature type="signal peptide" evidence="2">
    <location>
        <begin position="1"/>
        <end position="30"/>
    </location>
</feature>
<feature type="chain" id="PRO_0000020672" description="Alginate biosynthesis protein AlgX">
    <location>
        <begin position="31"/>
        <end position="485"/>
    </location>
</feature>
<feature type="region of interest" description="SGNH hydrolase-like domain">
    <location>
        <begin position="30"/>
        <end position="355"/>
    </location>
</feature>
<feature type="region of interest" description="CBM domain">
    <location>
        <begin position="356"/>
        <end position="482"/>
    </location>
</feature>
<feature type="active site" evidence="1">
    <location>
        <position position="182"/>
    </location>
</feature>
<feature type="active site" description="Proton acceptor" evidence="1">
    <location>
        <position position="184"/>
    </location>
</feature>
<feature type="active site" description="Nucleophile" evidence="1">
    <location>
        <position position="277"/>
    </location>
</feature>
<feature type="disulfide bond" evidence="1">
    <location>
        <begin position="47"/>
        <end position="237"/>
    </location>
</feature>
<feature type="disulfide bond" evidence="1">
    <location>
        <begin position="355"/>
        <end position="468"/>
    </location>
</feature>